<reference evidence="5" key="1">
    <citation type="journal article" date="1993" name="J. Biochem.">
        <title>Primary structures of platelet aggregation inhibitors (disintegrins) autoproteolytically released from snake venom hemorrhagic metalloproteinases and new fluorogenic peptide substrates for these enzymes.</title>
        <authorList>
            <person name="Takeya H."/>
            <person name="Nishida S."/>
            <person name="Nishino N."/>
            <person name="Makinose Y."/>
            <person name="Omori-Satoh T."/>
            <person name="Nikai T."/>
            <person name="Sugihara H."/>
            <person name="Iwanaga S."/>
        </authorList>
    </citation>
    <scope>PROTEIN SEQUENCE</scope>
    <source>
        <tissue evidence="4">Venom</tissue>
    </source>
</reference>
<dbReference type="EC" id="3.4.24.-"/>
<dbReference type="PIR" id="JX0265">
    <property type="entry name" value="JX0265"/>
</dbReference>
<dbReference type="SMR" id="Q9PSN7"/>
<dbReference type="GO" id="GO:0005576">
    <property type="term" value="C:extracellular region"/>
    <property type="evidence" value="ECO:0007669"/>
    <property type="project" value="UniProtKB-SubCell"/>
</dbReference>
<dbReference type="GO" id="GO:0005886">
    <property type="term" value="C:plasma membrane"/>
    <property type="evidence" value="ECO:0007669"/>
    <property type="project" value="TreeGrafter"/>
</dbReference>
<dbReference type="GO" id="GO:0046872">
    <property type="term" value="F:metal ion binding"/>
    <property type="evidence" value="ECO:0007669"/>
    <property type="project" value="UniProtKB-KW"/>
</dbReference>
<dbReference type="GO" id="GO:0008237">
    <property type="term" value="F:metallopeptidase activity"/>
    <property type="evidence" value="ECO:0000314"/>
    <property type="project" value="UniProtKB"/>
</dbReference>
<dbReference type="GO" id="GO:0090729">
    <property type="term" value="F:toxin activity"/>
    <property type="evidence" value="ECO:0007669"/>
    <property type="project" value="UniProtKB-KW"/>
</dbReference>
<dbReference type="GO" id="GO:0007596">
    <property type="term" value="P:blood coagulation"/>
    <property type="evidence" value="ECO:0000304"/>
    <property type="project" value="UniProtKB"/>
</dbReference>
<dbReference type="GO" id="GO:0006508">
    <property type="term" value="P:proteolysis"/>
    <property type="evidence" value="ECO:0007669"/>
    <property type="project" value="UniProtKB-KW"/>
</dbReference>
<dbReference type="FunFam" id="4.10.70.10:FF:000001">
    <property type="entry name" value="Disintegrin and metalloproteinase domain-containing protein 22"/>
    <property type="match status" value="1"/>
</dbReference>
<dbReference type="Gene3D" id="3.40.1620.60">
    <property type="match status" value="1"/>
</dbReference>
<dbReference type="Gene3D" id="4.10.70.10">
    <property type="entry name" value="Disintegrin domain"/>
    <property type="match status" value="1"/>
</dbReference>
<dbReference type="InterPro" id="IPR006586">
    <property type="entry name" value="ADAM_Cys-rich"/>
</dbReference>
<dbReference type="InterPro" id="IPR018358">
    <property type="entry name" value="Disintegrin_CS"/>
</dbReference>
<dbReference type="InterPro" id="IPR001762">
    <property type="entry name" value="Disintegrin_dom"/>
</dbReference>
<dbReference type="InterPro" id="IPR036436">
    <property type="entry name" value="Disintegrin_dom_sf"/>
</dbReference>
<dbReference type="PANTHER" id="PTHR11905">
    <property type="entry name" value="ADAM A DISINTEGRIN AND METALLOPROTEASE DOMAIN"/>
    <property type="match status" value="1"/>
</dbReference>
<dbReference type="PANTHER" id="PTHR11905:SF32">
    <property type="entry name" value="DISINTEGRIN AND METALLOPROTEINASE DOMAIN-CONTAINING PROTEIN 28"/>
    <property type="match status" value="1"/>
</dbReference>
<dbReference type="Pfam" id="PF08516">
    <property type="entry name" value="ADAM_CR"/>
    <property type="match status" value="1"/>
</dbReference>
<dbReference type="Pfam" id="PF00200">
    <property type="entry name" value="Disintegrin"/>
    <property type="match status" value="1"/>
</dbReference>
<dbReference type="PRINTS" id="PR00289">
    <property type="entry name" value="DISINTEGRIN"/>
</dbReference>
<dbReference type="SMART" id="SM00608">
    <property type="entry name" value="ACR"/>
    <property type="match status" value="1"/>
</dbReference>
<dbReference type="SMART" id="SM00050">
    <property type="entry name" value="DISIN"/>
    <property type="match status" value="1"/>
</dbReference>
<dbReference type="SUPFAM" id="SSF57552">
    <property type="entry name" value="Blood coagulation inhibitor (disintegrin)"/>
    <property type="match status" value="1"/>
</dbReference>
<dbReference type="PROSITE" id="PS00427">
    <property type="entry name" value="DISINTEGRIN_1"/>
    <property type="match status" value="1"/>
</dbReference>
<dbReference type="PROSITE" id="PS50214">
    <property type="entry name" value="DISINTEGRIN_2"/>
    <property type="match status" value="1"/>
</dbReference>
<protein>
    <recommendedName>
        <fullName>Snake venom metalloproteinase HT-1</fullName>
        <shortName>SVMP</shortName>
        <ecNumber>3.4.24.-</ecNumber>
    </recommendedName>
    <alternativeName>
        <fullName>Hemorrhagic metalloproteinase HT-1</fullName>
    </alternativeName>
    <alternativeName>
        <fullName>Hemorrhagic toxin I</fullName>
    </alternativeName>
</protein>
<sequence>LGTDIISPPVCGNELLEVGEECDCGFPRNCRDPCCDATTCKLHSWVECESGECCGQCKFTSAGNECRPARSECDIAESCTGQSADCPMDDFHRNGQPCLNNFGYCYNGNCPILYHQCYALFGSNVYEAEDSCFERNQKGDDDGYCRKENGEKIPCAPEDVKCGRLYCKDNSPGPNDSCKTFNSNEDDHKEMVLPGTKCADGKVCSNGHCVDVASAY</sequence>
<evidence type="ECO:0000250" key="1"/>
<evidence type="ECO:0000250" key="2">
    <source>
        <dbReference type="UniProtKB" id="P20164"/>
    </source>
</evidence>
<evidence type="ECO:0000255" key="3">
    <source>
        <dbReference type="PROSITE-ProRule" id="PRU00068"/>
    </source>
</evidence>
<evidence type="ECO:0000269" key="4">
    <source>
    </source>
</evidence>
<evidence type="ECO:0000305" key="5"/>
<feature type="chain" id="PRO_0000078190" description="Snake venom metalloproteinase HT-1">
    <location>
        <begin position="1" status="less than"/>
        <end position="216"/>
    </location>
</feature>
<feature type="domain" description="Disintegrin" evidence="3">
    <location>
        <begin position="8"/>
        <end position="94"/>
    </location>
</feature>
<feature type="short sequence motif" description="D/ECD-tripeptide">
    <location>
        <begin position="72"/>
        <end position="74"/>
    </location>
</feature>
<feature type="binding site" evidence="1">
    <location>
        <position position="10"/>
    </location>
    <ligand>
        <name>Ca(2+)</name>
        <dbReference type="ChEBI" id="CHEBI:29108"/>
    </ligand>
</feature>
<feature type="binding site" evidence="1">
    <location>
        <position position="13"/>
    </location>
    <ligand>
        <name>Ca(2+)</name>
        <dbReference type="ChEBI" id="CHEBI:29108"/>
    </ligand>
</feature>
<feature type="binding site" evidence="1">
    <location>
        <position position="15"/>
    </location>
    <ligand>
        <name>Ca(2+)</name>
        <dbReference type="ChEBI" id="CHEBI:29108"/>
    </ligand>
</feature>
<feature type="binding site" evidence="1">
    <location>
        <position position="17"/>
    </location>
    <ligand>
        <name>Ca(2+)</name>
        <dbReference type="ChEBI" id="CHEBI:29108"/>
    </ligand>
</feature>
<feature type="binding site" evidence="1">
    <location>
        <position position="20"/>
    </location>
    <ligand>
        <name>Ca(2+)</name>
        <dbReference type="ChEBI" id="CHEBI:29108"/>
    </ligand>
</feature>
<feature type="binding site" evidence="1">
    <location>
        <position position="23"/>
    </location>
    <ligand>
        <name>Ca(2+)</name>
        <dbReference type="ChEBI" id="CHEBI:29108"/>
    </ligand>
</feature>
<feature type="glycosylation site" description="N-linked (GlcNAc...) asparagine" evidence="5">
    <location>
        <position position="175"/>
    </location>
</feature>
<feature type="disulfide bond" evidence="3">
    <location>
        <begin position="11"/>
        <end position="40"/>
    </location>
</feature>
<feature type="disulfide bond" evidence="3">
    <location>
        <begin position="22"/>
        <end position="35"/>
    </location>
</feature>
<feature type="disulfide bond" evidence="3">
    <location>
        <begin position="24"/>
        <end position="30"/>
    </location>
</feature>
<feature type="disulfide bond" evidence="2 3">
    <location>
        <begin position="34"/>
        <end position="57"/>
    </location>
</feature>
<feature type="disulfide bond" evidence="2 3">
    <location>
        <begin position="48"/>
        <end position="54"/>
    </location>
</feature>
<feature type="disulfide bond" evidence="2 3">
    <location>
        <begin position="53"/>
        <end position="79"/>
    </location>
</feature>
<feature type="disulfide bond" evidence="2 3">
    <location>
        <begin position="66"/>
        <end position="86"/>
    </location>
</feature>
<feature type="disulfide bond" evidence="3">
    <location>
        <begin position="73"/>
        <end position="105"/>
    </location>
</feature>
<feature type="disulfide bond" evidence="3">
    <location>
        <begin position="98"/>
        <end position="110"/>
    </location>
</feature>
<feature type="disulfide bond" evidence="3">
    <location>
        <begin position="117"/>
        <end position="167"/>
    </location>
</feature>
<feature type="disulfide bond" evidence="3">
    <location>
        <begin position="132"/>
        <end position="178"/>
    </location>
</feature>
<feature type="disulfide bond" evidence="3">
    <location>
        <begin position="145"/>
        <end position="155"/>
    </location>
</feature>
<feature type="disulfide bond" evidence="3">
    <location>
        <begin position="162"/>
        <end position="204"/>
    </location>
</feature>
<feature type="disulfide bond" evidence="3">
    <location>
        <begin position="198"/>
        <end position="209"/>
    </location>
</feature>
<feature type="non-terminal residue">
    <location>
        <position position="1"/>
    </location>
</feature>
<organism evidence="5">
    <name type="scientific">Crotalus ruber ruber</name>
    <name type="common">Red diamond rattlesnake</name>
    <dbReference type="NCBI Taxonomy" id="8736"/>
    <lineage>
        <taxon>Eukaryota</taxon>
        <taxon>Metazoa</taxon>
        <taxon>Chordata</taxon>
        <taxon>Craniata</taxon>
        <taxon>Vertebrata</taxon>
        <taxon>Euteleostomi</taxon>
        <taxon>Lepidosauria</taxon>
        <taxon>Squamata</taxon>
        <taxon>Bifurcata</taxon>
        <taxon>Unidentata</taxon>
        <taxon>Episquamata</taxon>
        <taxon>Toxicofera</taxon>
        <taxon>Serpentes</taxon>
        <taxon>Colubroidea</taxon>
        <taxon>Viperidae</taxon>
        <taxon>Crotalinae</taxon>
        <taxon>Crotalus</taxon>
    </lineage>
</organism>
<proteinExistence type="evidence at protein level"/>
<accession>Q9PSN7</accession>
<name>VM3H1_CRORU</name>
<comment type="function">
    <text evidence="1">Zinc protease from snake venom that induces hemorrhage.</text>
</comment>
<comment type="cofactor">
    <cofactor evidence="1">
        <name>Zn(2+)</name>
        <dbReference type="ChEBI" id="CHEBI:29105"/>
    </cofactor>
    <text evidence="1">Binds 1 zinc ion per subunit.</text>
</comment>
<comment type="subunit">
    <text evidence="1">Monomer.</text>
</comment>
<comment type="subcellular location">
    <subcellularLocation>
        <location>Secreted</location>
    </subcellularLocation>
</comment>
<comment type="tissue specificity">
    <text>Expressed by the venom gland.</text>
</comment>
<comment type="similarity">
    <text evidence="5">Belongs to the venom metalloproteinase (M12B) family. P-III subfamily. P-IIIa sub-subfamily.</text>
</comment>
<keyword id="KW-0106">Calcium</keyword>
<keyword id="KW-0903">Direct protein sequencing</keyword>
<keyword id="KW-1015">Disulfide bond</keyword>
<keyword id="KW-0325">Glycoprotein</keyword>
<keyword id="KW-1200">Hemorrhagic toxin</keyword>
<keyword id="KW-1199">Hemostasis impairing toxin</keyword>
<keyword id="KW-0378">Hydrolase</keyword>
<keyword id="KW-0479">Metal-binding</keyword>
<keyword id="KW-0482">Metalloprotease</keyword>
<keyword id="KW-0645">Protease</keyword>
<keyword id="KW-0964">Secreted</keyword>
<keyword id="KW-0800">Toxin</keyword>
<keyword id="KW-0862">Zinc</keyword>